<evidence type="ECO:0000255" key="1">
    <source>
        <dbReference type="HAMAP-Rule" id="MF_00091"/>
    </source>
</evidence>
<proteinExistence type="inferred from homology"/>
<dbReference type="EC" id="4.4.1.21" evidence="1"/>
<dbReference type="EMBL" id="CP000961">
    <property type="protein sequence ID" value="ACA87882.1"/>
    <property type="molecule type" value="Genomic_DNA"/>
</dbReference>
<dbReference type="RefSeq" id="WP_012326215.1">
    <property type="nucleotide sequence ID" value="NC_010506.1"/>
</dbReference>
<dbReference type="SMR" id="B1KD47"/>
<dbReference type="STRING" id="392500.Swoo_3618"/>
<dbReference type="KEGG" id="swd:Swoo_3618"/>
<dbReference type="eggNOG" id="COG1854">
    <property type="taxonomic scope" value="Bacteria"/>
</dbReference>
<dbReference type="HOGENOM" id="CLU_107531_2_0_6"/>
<dbReference type="Proteomes" id="UP000002168">
    <property type="component" value="Chromosome"/>
</dbReference>
<dbReference type="GO" id="GO:0005506">
    <property type="term" value="F:iron ion binding"/>
    <property type="evidence" value="ECO:0007669"/>
    <property type="project" value="InterPro"/>
</dbReference>
<dbReference type="GO" id="GO:0043768">
    <property type="term" value="F:S-ribosylhomocysteine lyase activity"/>
    <property type="evidence" value="ECO:0007669"/>
    <property type="project" value="UniProtKB-UniRule"/>
</dbReference>
<dbReference type="GO" id="GO:0009372">
    <property type="term" value="P:quorum sensing"/>
    <property type="evidence" value="ECO:0007669"/>
    <property type="project" value="UniProtKB-UniRule"/>
</dbReference>
<dbReference type="Gene3D" id="3.30.1360.80">
    <property type="entry name" value="S-ribosylhomocysteinase (LuxS)"/>
    <property type="match status" value="1"/>
</dbReference>
<dbReference type="HAMAP" id="MF_00091">
    <property type="entry name" value="LuxS"/>
    <property type="match status" value="1"/>
</dbReference>
<dbReference type="InterPro" id="IPR037005">
    <property type="entry name" value="LuxS_sf"/>
</dbReference>
<dbReference type="InterPro" id="IPR011249">
    <property type="entry name" value="Metalloenz_LuxS/M16"/>
</dbReference>
<dbReference type="InterPro" id="IPR003815">
    <property type="entry name" value="S-ribosylhomocysteinase"/>
</dbReference>
<dbReference type="NCBIfam" id="NF002602">
    <property type="entry name" value="PRK02260.1-2"/>
    <property type="match status" value="1"/>
</dbReference>
<dbReference type="PANTHER" id="PTHR35799">
    <property type="entry name" value="S-RIBOSYLHOMOCYSTEINE LYASE"/>
    <property type="match status" value="1"/>
</dbReference>
<dbReference type="PANTHER" id="PTHR35799:SF1">
    <property type="entry name" value="S-RIBOSYLHOMOCYSTEINE LYASE"/>
    <property type="match status" value="1"/>
</dbReference>
<dbReference type="Pfam" id="PF02664">
    <property type="entry name" value="LuxS"/>
    <property type="match status" value="1"/>
</dbReference>
<dbReference type="PIRSF" id="PIRSF006160">
    <property type="entry name" value="AI2"/>
    <property type="match status" value="1"/>
</dbReference>
<dbReference type="PRINTS" id="PR01487">
    <property type="entry name" value="LUXSPROTEIN"/>
</dbReference>
<dbReference type="SUPFAM" id="SSF63411">
    <property type="entry name" value="LuxS/MPP-like metallohydrolase"/>
    <property type="match status" value="1"/>
</dbReference>
<feature type="chain" id="PRO_1000093328" description="S-ribosylhomocysteine lyase">
    <location>
        <begin position="1"/>
        <end position="169"/>
    </location>
</feature>
<feature type="binding site" evidence="1">
    <location>
        <position position="54"/>
    </location>
    <ligand>
        <name>Fe cation</name>
        <dbReference type="ChEBI" id="CHEBI:24875"/>
    </ligand>
</feature>
<feature type="binding site" evidence="1">
    <location>
        <position position="58"/>
    </location>
    <ligand>
        <name>Fe cation</name>
        <dbReference type="ChEBI" id="CHEBI:24875"/>
    </ligand>
</feature>
<feature type="binding site" evidence="1">
    <location>
        <position position="128"/>
    </location>
    <ligand>
        <name>Fe cation</name>
        <dbReference type="ChEBI" id="CHEBI:24875"/>
    </ligand>
</feature>
<sequence length="169" mass="18586">MPLLDSFTVDHTRMNAPAVRVAKTMKSPSGDTITVFDLRFCAPNKDILSERGIHTLEHLYAGFMRNHLNGDNVEIIDISPMGCRTGFYMSLIGSPKEADVAEAWLASMNDVLTVASQSEIPELNEYQCGTFNMHSLEQAQGIARSIIASGISVNKNDELKLSEKILKGL</sequence>
<accession>B1KD47</accession>
<comment type="function">
    <text evidence="1">Involved in the synthesis of autoinducer 2 (AI-2) which is secreted by bacteria and is used to communicate both the cell density and the metabolic potential of the environment. The regulation of gene expression in response to changes in cell density is called quorum sensing. Catalyzes the transformation of S-ribosylhomocysteine (RHC) to homocysteine (HC) and 4,5-dihydroxy-2,3-pentadione (DPD).</text>
</comment>
<comment type="catalytic activity">
    <reaction evidence="1">
        <text>S-(5-deoxy-D-ribos-5-yl)-L-homocysteine = (S)-4,5-dihydroxypentane-2,3-dione + L-homocysteine</text>
        <dbReference type="Rhea" id="RHEA:17753"/>
        <dbReference type="ChEBI" id="CHEBI:29484"/>
        <dbReference type="ChEBI" id="CHEBI:58195"/>
        <dbReference type="ChEBI" id="CHEBI:58199"/>
        <dbReference type="EC" id="4.4.1.21"/>
    </reaction>
</comment>
<comment type="cofactor">
    <cofactor evidence="1">
        <name>Fe cation</name>
        <dbReference type="ChEBI" id="CHEBI:24875"/>
    </cofactor>
    <text evidence="1">Binds 1 Fe cation per subunit.</text>
</comment>
<comment type="subunit">
    <text evidence="1">Homodimer.</text>
</comment>
<comment type="similarity">
    <text evidence="1">Belongs to the LuxS family.</text>
</comment>
<organism>
    <name type="scientific">Shewanella woodyi (strain ATCC 51908 / MS32)</name>
    <dbReference type="NCBI Taxonomy" id="392500"/>
    <lineage>
        <taxon>Bacteria</taxon>
        <taxon>Pseudomonadati</taxon>
        <taxon>Pseudomonadota</taxon>
        <taxon>Gammaproteobacteria</taxon>
        <taxon>Alteromonadales</taxon>
        <taxon>Shewanellaceae</taxon>
        <taxon>Shewanella</taxon>
    </lineage>
</organism>
<name>LUXS_SHEWM</name>
<keyword id="KW-0071">Autoinducer synthesis</keyword>
<keyword id="KW-0408">Iron</keyword>
<keyword id="KW-0456">Lyase</keyword>
<keyword id="KW-0479">Metal-binding</keyword>
<keyword id="KW-0673">Quorum sensing</keyword>
<keyword id="KW-1185">Reference proteome</keyword>
<gene>
    <name evidence="1" type="primary">luxS</name>
    <name type="ordered locus">Swoo_3618</name>
</gene>
<reference key="1">
    <citation type="submission" date="2008-02" db="EMBL/GenBank/DDBJ databases">
        <title>Complete sequence of Shewanella woodyi ATCC 51908.</title>
        <authorList>
            <consortium name="US DOE Joint Genome Institute"/>
            <person name="Copeland A."/>
            <person name="Lucas S."/>
            <person name="Lapidus A."/>
            <person name="Glavina del Rio T."/>
            <person name="Dalin E."/>
            <person name="Tice H."/>
            <person name="Bruce D."/>
            <person name="Goodwin L."/>
            <person name="Pitluck S."/>
            <person name="Sims D."/>
            <person name="Brettin T."/>
            <person name="Detter J.C."/>
            <person name="Han C."/>
            <person name="Kuske C.R."/>
            <person name="Schmutz J."/>
            <person name="Larimer F."/>
            <person name="Land M."/>
            <person name="Hauser L."/>
            <person name="Kyrpides N."/>
            <person name="Lykidis A."/>
            <person name="Zhao J.-S."/>
            <person name="Richardson P."/>
        </authorList>
    </citation>
    <scope>NUCLEOTIDE SEQUENCE [LARGE SCALE GENOMIC DNA]</scope>
    <source>
        <strain>ATCC 51908 / MS32</strain>
    </source>
</reference>
<protein>
    <recommendedName>
        <fullName evidence="1">S-ribosylhomocysteine lyase</fullName>
        <ecNumber evidence="1">4.4.1.21</ecNumber>
    </recommendedName>
    <alternativeName>
        <fullName evidence="1">AI-2 synthesis protein</fullName>
    </alternativeName>
    <alternativeName>
        <fullName evidence="1">Autoinducer-2 production protein LuxS</fullName>
    </alternativeName>
</protein>